<organism>
    <name type="scientific">Shewanella woodyi (strain ATCC 51908 / MS32)</name>
    <dbReference type="NCBI Taxonomy" id="392500"/>
    <lineage>
        <taxon>Bacteria</taxon>
        <taxon>Pseudomonadati</taxon>
        <taxon>Pseudomonadota</taxon>
        <taxon>Gammaproteobacteria</taxon>
        <taxon>Alteromonadales</taxon>
        <taxon>Shewanellaceae</taxon>
        <taxon>Shewanella</taxon>
    </lineage>
</organism>
<proteinExistence type="inferred from homology"/>
<comment type="similarity">
    <text evidence="1">Belongs to the UPF0301 (AlgH) family.</text>
</comment>
<reference key="1">
    <citation type="submission" date="2008-02" db="EMBL/GenBank/DDBJ databases">
        <title>Complete sequence of Shewanella woodyi ATCC 51908.</title>
        <authorList>
            <consortium name="US DOE Joint Genome Institute"/>
            <person name="Copeland A."/>
            <person name="Lucas S."/>
            <person name="Lapidus A."/>
            <person name="Glavina del Rio T."/>
            <person name="Dalin E."/>
            <person name="Tice H."/>
            <person name="Bruce D."/>
            <person name="Goodwin L."/>
            <person name="Pitluck S."/>
            <person name="Sims D."/>
            <person name="Brettin T."/>
            <person name="Detter J.C."/>
            <person name="Han C."/>
            <person name="Kuske C.R."/>
            <person name="Schmutz J."/>
            <person name="Larimer F."/>
            <person name="Land M."/>
            <person name="Hauser L."/>
            <person name="Kyrpides N."/>
            <person name="Lykidis A."/>
            <person name="Zhao J.-S."/>
            <person name="Richardson P."/>
        </authorList>
    </citation>
    <scope>NUCLEOTIDE SEQUENCE [LARGE SCALE GENOMIC DNA]</scope>
    <source>
        <strain>ATCC 51908 / MS32</strain>
    </source>
</reference>
<name>Y1337_SHEWM</name>
<evidence type="ECO:0000255" key="1">
    <source>
        <dbReference type="HAMAP-Rule" id="MF_00758"/>
    </source>
</evidence>
<accession>B1KIY1</accession>
<protein>
    <recommendedName>
        <fullName evidence="1">UPF0301 protein Swoo_1337</fullName>
    </recommendedName>
</protein>
<feature type="chain" id="PRO_1000198300" description="UPF0301 protein Swoo_1337">
    <location>
        <begin position="1"/>
        <end position="186"/>
    </location>
</feature>
<dbReference type="EMBL" id="CP000961">
    <property type="protein sequence ID" value="ACA85629.1"/>
    <property type="molecule type" value="Genomic_DNA"/>
</dbReference>
<dbReference type="RefSeq" id="WP_012323975.1">
    <property type="nucleotide sequence ID" value="NC_010506.1"/>
</dbReference>
<dbReference type="SMR" id="B1KIY1"/>
<dbReference type="STRING" id="392500.Swoo_1337"/>
<dbReference type="KEGG" id="swd:Swoo_1337"/>
<dbReference type="eggNOG" id="COG1678">
    <property type="taxonomic scope" value="Bacteria"/>
</dbReference>
<dbReference type="HOGENOM" id="CLU_057596_1_0_6"/>
<dbReference type="Proteomes" id="UP000002168">
    <property type="component" value="Chromosome"/>
</dbReference>
<dbReference type="GO" id="GO:0005829">
    <property type="term" value="C:cytosol"/>
    <property type="evidence" value="ECO:0007669"/>
    <property type="project" value="TreeGrafter"/>
</dbReference>
<dbReference type="Gene3D" id="3.40.1740.10">
    <property type="entry name" value="VC0467-like"/>
    <property type="match status" value="1"/>
</dbReference>
<dbReference type="HAMAP" id="MF_00758">
    <property type="entry name" value="UPF0301"/>
    <property type="match status" value="1"/>
</dbReference>
<dbReference type="InterPro" id="IPR003774">
    <property type="entry name" value="AlgH-like"/>
</dbReference>
<dbReference type="NCBIfam" id="NF001266">
    <property type="entry name" value="PRK00228.1-1"/>
    <property type="match status" value="1"/>
</dbReference>
<dbReference type="PANTHER" id="PTHR30327">
    <property type="entry name" value="UNCHARACTERIZED PROTEIN YQGE"/>
    <property type="match status" value="1"/>
</dbReference>
<dbReference type="PANTHER" id="PTHR30327:SF1">
    <property type="entry name" value="UPF0301 PROTEIN YQGE"/>
    <property type="match status" value="1"/>
</dbReference>
<dbReference type="Pfam" id="PF02622">
    <property type="entry name" value="DUF179"/>
    <property type="match status" value="1"/>
</dbReference>
<dbReference type="SUPFAM" id="SSF143456">
    <property type="entry name" value="VC0467-like"/>
    <property type="match status" value="1"/>
</dbReference>
<sequence>MNSLQNHLLIAMPSLQDTFFERSVIYLCEHDEKGAMGLMINRPIGIDVNELLKQMELDEEPDPITSLGSAVLIGGPVNQERGFVLHTPQTNWNNSQSLTDEIMLTTSRDVLTSLGTDAAPENFIVTLGYAGWSKDQLEQELAENTWLSIPATKELLFDIGFNDRWQQATESLGFDIWQLSNQSGHA</sequence>
<keyword id="KW-1185">Reference proteome</keyword>
<gene>
    <name type="ordered locus">Swoo_1337</name>
</gene>